<feature type="signal peptide" evidence="2">
    <location>
        <begin position="1"/>
        <end position="20"/>
    </location>
</feature>
<feature type="chain" id="PRO_0000022753" description="Group IIC secretory phospholipase A2">
    <location>
        <begin position="21"/>
        <end position="150"/>
    </location>
</feature>
<feature type="active site" evidence="1">
    <location>
        <position position="67"/>
    </location>
</feature>
<feature type="active site" evidence="1">
    <location>
        <position position="115"/>
    </location>
</feature>
<feature type="binding site" evidence="1">
    <location>
        <position position="47"/>
    </location>
    <ligand>
        <name>Ca(2+)</name>
        <dbReference type="ChEBI" id="CHEBI:29108"/>
    </ligand>
</feature>
<feature type="binding site" evidence="1">
    <location>
        <position position="49"/>
    </location>
    <ligand>
        <name>Ca(2+)</name>
        <dbReference type="ChEBI" id="CHEBI:29108"/>
    </ligand>
</feature>
<feature type="binding site" evidence="1">
    <location>
        <position position="51"/>
    </location>
    <ligand>
        <name>Ca(2+)</name>
        <dbReference type="ChEBI" id="CHEBI:29108"/>
    </ligand>
</feature>
<feature type="binding site" evidence="1">
    <location>
        <position position="68"/>
    </location>
    <ligand>
        <name>Ca(2+)</name>
        <dbReference type="ChEBI" id="CHEBI:29108"/>
    </ligand>
</feature>
<feature type="glycosylation site" description="N-linked (GlcNAc...) asparagine" evidence="2">
    <location>
        <position position="92"/>
    </location>
</feature>
<feature type="disulfide bond" evidence="1">
    <location>
        <begin position="46"/>
        <end position="143"/>
    </location>
</feature>
<feature type="disulfide bond" evidence="1">
    <location>
        <begin position="48"/>
        <end position="64"/>
    </location>
</feature>
<feature type="disulfide bond" evidence="1">
    <location>
        <begin position="63"/>
        <end position="121"/>
    </location>
</feature>
<feature type="disulfide bond" evidence="1">
    <location>
        <begin position="69"/>
        <end position="150"/>
    </location>
</feature>
<feature type="disulfide bond" evidence="1">
    <location>
        <begin position="70"/>
        <end position="114"/>
    </location>
</feature>
<feature type="disulfide bond" evidence="1">
    <location>
        <begin position="79"/>
        <end position="107"/>
    </location>
</feature>
<feature type="disulfide bond" evidence="1">
    <location>
        <begin position="97"/>
        <end position="112"/>
    </location>
</feature>
<feature type="disulfide bond" evidence="2">
    <location>
        <begin position="99"/>
        <end position="105"/>
    </location>
</feature>
<feature type="sequence conflict" description="In Ref. 2." evidence="5" ref="2">
    <original>M</original>
    <variation>W</variation>
    <location>
        <position position="28"/>
    </location>
</feature>
<feature type="sequence conflict" description="In Ref. 2." evidence="5" ref="2">
    <original>Y</original>
    <variation>W</variation>
    <location>
        <position position="77"/>
    </location>
</feature>
<organism>
    <name type="scientific">Mus musculus</name>
    <name type="common">Mouse</name>
    <dbReference type="NCBI Taxonomy" id="10090"/>
    <lineage>
        <taxon>Eukaryota</taxon>
        <taxon>Metazoa</taxon>
        <taxon>Chordata</taxon>
        <taxon>Craniata</taxon>
        <taxon>Vertebrata</taxon>
        <taxon>Euteleostomi</taxon>
        <taxon>Mammalia</taxon>
        <taxon>Eutheria</taxon>
        <taxon>Euarchontoglires</taxon>
        <taxon>Glires</taxon>
        <taxon>Rodentia</taxon>
        <taxon>Myomorpha</taxon>
        <taxon>Muroidea</taxon>
        <taxon>Muridae</taxon>
        <taxon>Murinae</taxon>
        <taxon>Mus</taxon>
        <taxon>Mus</taxon>
    </lineage>
</organism>
<comment type="function">
    <text>PA2 catalyzes the calcium-dependent hydrolysis of the 2-acyl groups in 3-sn-phosphoglycerides. Testis PA2 may be important in the production of prostaglandins, by the release of arachidonic acid, which in turn are necessary for the contractions of the seminiferous tubules and the testicular capsule; they also seem to decrease sperm transit time through the male reproductive tract.</text>
</comment>
<comment type="catalytic activity">
    <reaction evidence="3 4">
        <text>a 1,2-diacyl-sn-glycero-3-phosphocholine + H2O = a 1-acyl-sn-glycero-3-phosphocholine + a fatty acid + H(+)</text>
        <dbReference type="Rhea" id="RHEA:15801"/>
        <dbReference type="ChEBI" id="CHEBI:15377"/>
        <dbReference type="ChEBI" id="CHEBI:15378"/>
        <dbReference type="ChEBI" id="CHEBI:28868"/>
        <dbReference type="ChEBI" id="CHEBI:57643"/>
        <dbReference type="ChEBI" id="CHEBI:58168"/>
        <dbReference type="EC" id="3.1.1.4"/>
    </reaction>
</comment>
<comment type="cofactor">
    <cofactor evidence="1">
        <name>Ca(2+)</name>
        <dbReference type="ChEBI" id="CHEBI:29108"/>
    </cofactor>
    <text evidence="1">Binds 1 Ca(2+) ion per subunit.</text>
</comment>
<comment type="subcellular location">
    <subcellularLocation>
        <location evidence="5">Secreted</location>
    </subcellularLocation>
</comment>
<comment type="tissue specificity">
    <text>Testis specific.</text>
</comment>
<comment type="developmental stage">
    <text>Expressed mainly in pachytene and secondary spermatocytes and round spermatids and predominates in stage VI-VII tubules.</text>
</comment>
<comment type="similarity">
    <text evidence="5">Belongs to the phospholipase A2 family.</text>
</comment>
<keyword id="KW-0106">Calcium</keyword>
<keyword id="KW-1015">Disulfide bond</keyword>
<keyword id="KW-0325">Glycoprotein</keyword>
<keyword id="KW-0378">Hydrolase</keyword>
<keyword id="KW-0442">Lipid degradation</keyword>
<keyword id="KW-0443">Lipid metabolism</keyword>
<keyword id="KW-0479">Metal-binding</keyword>
<keyword id="KW-1185">Reference proteome</keyword>
<keyword id="KW-0964">Secreted</keyword>
<keyword id="KW-0732">Signal</keyword>
<evidence type="ECO:0000250" key="1"/>
<evidence type="ECO:0000255" key="2"/>
<evidence type="ECO:0000255" key="3">
    <source>
        <dbReference type="PROSITE-ProRule" id="PRU10035"/>
    </source>
</evidence>
<evidence type="ECO:0000255" key="4">
    <source>
        <dbReference type="PROSITE-ProRule" id="PRU10036"/>
    </source>
</evidence>
<evidence type="ECO:0000305" key="5"/>
<sequence length="150" mass="16983">MKGIAIFLVFIFYWTTSTLSSFWQFQRMVKHVTGRSAFFSYYGYGCYCGLGGKGLPVDATDRCCWAHDCCYHKLKEYGCQPILNAYQFTIVNGTVTCGCTVASSCPCGQKACECDKQSVYCFKENLATYEKAFKQLFPTRPQCGRDKLQC</sequence>
<protein>
    <recommendedName>
        <fullName>Group IIC secretory phospholipase A2</fullName>
        <shortName>GIIC sPLA2</shortName>
        <shortName>sPLA2-IIC</shortName>
        <ecNumber>3.1.1.4</ecNumber>
    </recommendedName>
    <alternativeName>
        <fullName>14 kDa phospholipase A2</fullName>
    </alternativeName>
    <alternativeName>
        <fullName>PLA2-8</fullName>
    </alternativeName>
    <alternativeName>
        <fullName>Phosphatidylcholine 2-acylhydrolase 2C</fullName>
    </alternativeName>
</protein>
<gene>
    <name type="primary">Pla2g2c</name>
</gene>
<dbReference type="EC" id="3.1.1.4"/>
<dbReference type="EMBL" id="U18119">
    <property type="protein sequence ID" value="AAC52936.1"/>
    <property type="molecule type" value="mRNA"/>
</dbReference>
<dbReference type="CCDS" id="CCDS18831.1"/>
<dbReference type="PIR" id="A54762">
    <property type="entry name" value="A54762"/>
</dbReference>
<dbReference type="RefSeq" id="NP_032894.2">
    <property type="nucleotide sequence ID" value="NM_008868.3"/>
</dbReference>
<dbReference type="SMR" id="P48076"/>
<dbReference type="FunCoup" id="P48076">
    <property type="interactions" value="412"/>
</dbReference>
<dbReference type="STRING" id="10090.ENSMUSP00000101434"/>
<dbReference type="BindingDB" id="P48076"/>
<dbReference type="ChEMBL" id="CHEMBL5169135"/>
<dbReference type="GlyCosmos" id="P48076">
    <property type="glycosylation" value="1 site, No reported glycans"/>
</dbReference>
<dbReference type="GlyGen" id="P48076">
    <property type="glycosylation" value="1 site"/>
</dbReference>
<dbReference type="PaxDb" id="10090-ENSMUSP00000101434"/>
<dbReference type="ProteomicsDB" id="294320"/>
<dbReference type="DNASU" id="18781"/>
<dbReference type="GeneID" id="18781"/>
<dbReference type="KEGG" id="mmu:18781"/>
<dbReference type="AGR" id="MGI:106638"/>
<dbReference type="CTD" id="391013"/>
<dbReference type="MGI" id="MGI:106638">
    <property type="gene designation" value="Pla2g2c"/>
</dbReference>
<dbReference type="eggNOG" id="KOG4087">
    <property type="taxonomic scope" value="Eukaryota"/>
</dbReference>
<dbReference type="InParanoid" id="P48076"/>
<dbReference type="OrthoDB" id="5841574at2759"/>
<dbReference type="PhylomeDB" id="P48076"/>
<dbReference type="BioGRID-ORCS" id="18781">
    <property type="hits" value="2 hits in 79 CRISPR screens"/>
</dbReference>
<dbReference type="PRO" id="PR:P48076"/>
<dbReference type="Proteomes" id="UP000000589">
    <property type="component" value="Unplaced"/>
</dbReference>
<dbReference type="RNAct" id="P48076">
    <property type="molecule type" value="protein"/>
</dbReference>
<dbReference type="GO" id="GO:0005576">
    <property type="term" value="C:extracellular region"/>
    <property type="evidence" value="ECO:0007669"/>
    <property type="project" value="UniProtKB-SubCell"/>
</dbReference>
<dbReference type="GO" id="GO:0005509">
    <property type="term" value="F:calcium ion binding"/>
    <property type="evidence" value="ECO:0007669"/>
    <property type="project" value="InterPro"/>
</dbReference>
<dbReference type="GO" id="GO:0004623">
    <property type="term" value="F:phospholipase A2 activity"/>
    <property type="evidence" value="ECO:0000266"/>
    <property type="project" value="MGI"/>
</dbReference>
<dbReference type="GO" id="GO:0050482">
    <property type="term" value="P:arachidonate secretion"/>
    <property type="evidence" value="ECO:0007669"/>
    <property type="project" value="InterPro"/>
</dbReference>
<dbReference type="GO" id="GO:0009395">
    <property type="term" value="P:phospholipid catabolic process"/>
    <property type="evidence" value="ECO:0000266"/>
    <property type="project" value="MGI"/>
</dbReference>
<dbReference type="CDD" id="cd00125">
    <property type="entry name" value="PLA2c"/>
    <property type="match status" value="1"/>
</dbReference>
<dbReference type="FunFam" id="1.20.90.10:FF:000008">
    <property type="entry name" value="Phospholipase A(2)"/>
    <property type="match status" value="1"/>
</dbReference>
<dbReference type="Gene3D" id="1.20.90.10">
    <property type="entry name" value="Phospholipase A2 domain"/>
    <property type="match status" value="1"/>
</dbReference>
<dbReference type="InterPro" id="IPR001211">
    <property type="entry name" value="PLipase_A2"/>
</dbReference>
<dbReference type="InterPro" id="IPR033112">
    <property type="entry name" value="PLipase_A2_Asp_AS"/>
</dbReference>
<dbReference type="InterPro" id="IPR016090">
    <property type="entry name" value="PLipase_A2_dom"/>
</dbReference>
<dbReference type="InterPro" id="IPR036444">
    <property type="entry name" value="PLipase_A2_dom_sf"/>
</dbReference>
<dbReference type="InterPro" id="IPR033113">
    <property type="entry name" value="PLipase_A2_His_AS"/>
</dbReference>
<dbReference type="PANTHER" id="PTHR11716:SF5">
    <property type="entry name" value="INACTIVE GROUP IIC SECRETORY PHOSPHOLIPASE A2-RELATED"/>
    <property type="match status" value="1"/>
</dbReference>
<dbReference type="PANTHER" id="PTHR11716">
    <property type="entry name" value="PHOSPHOLIPASE A2 FAMILY MEMBER"/>
    <property type="match status" value="1"/>
</dbReference>
<dbReference type="Pfam" id="PF00068">
    <property type="entry name" value="Phospholip_A2_1"/>
    <property type="match status" value="1"/>
</dbReference>
<dbReference type="PRINTS" id="PR00389">
    <property type="entry name" value="PHPHLIPASEA2"/>
</dbReference>
<dbReference type="SMART" id="SM00085">
    <property type="entry name" value="PA2c"/>
    <property type="match status" value="1"/>
</dbReference>
<dbReference type="SUPFAM" id="SSF48619">
    <property type="entry name" value="Phospholipase A2, PLA2"/>
    <property type="match status" value="1"/>
</dbReference>
<dbReference type="PROSITE" id="PS00119">
    <property type="entry name" value="PA2_ASP"/>
    <property type="match status" value="1"/>
</dbReference>
<dbReference type="PROSITE" id="PS00118">
    <property type="entry name" value="PA2_HIS"/>
    <property type="match status" value="1"/>
</dbReference>
<name>PA2GC_MOUSE</name>
<reference key="1">
    <citation type="journal article" date="1997" name="J. Cell. Biochem.">
        <title>Localization of group IIc low molecular weight phospholipase A2 mRNA to meiotic cells in the mouse.</title>
        <authorList>
            <person name="Chen J."/>
            <person name="Shao C."/>
            <person name="Lazar V."/>
            <person name="Srivastava C.H."/>
            <person name="Lee W."/>
            <person name="Tischfield J.A."/>
        </authorList>
    </citation>
    <scope>NUCLEOTIDE SEQUENCE [MRNA]</scope>
</reference>
<reference key="2">
    <citation type="journal article" date="1994" name="J. Biol. Chem.">
        <title>Cloning and characterization of novel rat and mouse low molecular weight Ca(2+)-dependent phospholipase A2s containing 16 cysteines.</title>
        <authorList>
            <person name="Chen J."/>
            <person name="Engle S.J."/>
            <person name="Seilhamer J.J."/>
            <person name="Tischfield J.A."/>
        </authorList>
    </citation>
    <scope>NUCLEOTIDE SEQUENCE [MRNA] OF 21-150</scope>
</reference>
<proteinExistence type="evidence at transcript level"/>
<accession>P48076</accession>